<reference key="1">
    <citation type="journal article" date="2004" name="Nature">
        <title>Genome evolution in yeasts.</title>
        <authorList>
            <person name="Dujon B."/>
            <person name="Sherman D."/>
            <person name="Fischer G."/>
            <person name="Durrens P."/>
            <person name="Casaregola S."/>
            <person name="Lafontaine I."/>
            <person name="de Montigny J."/>
            <person name="Marck C."/>
            <person name="Neuveglise C."/>
            <person name="Talla E."/>
            <person name="Goffard N."/>
            <person name="Frangeul L."/>
            <person name="Aigle M."/>
            <person name="Anthouard V."/>
            <person name="Babour A."/>
            <person name="Barbe V."/>
            <person name="Barnay S."/>
            <person name="Blanchin S."/>
            <person name="Beckerich J.-M."/>
            <person name="Beyne E."/>
            <person name="Bleykasten C."/>
            <person name="Boisrame A."/>
            <person name="Boyer J."/>
            <person name="Cattolico L."/>
            <person name="Confanioleri F."/>
            <person name="de Daruvar A."/>
            <person name="Despons L."/>
            <person name="Fabre E."/>
            <person name="Fairhead C."/>
            <person name="Ferry-Dumazet H."/>
            <person name="Groppi A."/>
            <person name="Hantraye F."/>
            <person name="Hennequin C."/>
            <person name="Jauniaux N."/>
            <person name="Joyet P."/>
            <person name="Kachouri R."/>
            <person name="Kerrest A."/>
            <person name="Koszul R."/>
            <person name="Lemaire M."/>
            <person name="Lesur I."/>
            <person name="Ma L."/>
            <person name="Muller H."/>
            <person name="Nicaud J.-M."/>
            <person name="Nikolski M."/>
            <person name="Oztas S."/>
            <person name="Ozier-Kalogeropoulos O."/>
            <person name="Pellenz S."/>
            <person name="Potier S."/>
            <person name="Richard G.-F."/>
            <person name="Straub M.-L."/>
            <person name="Suleau A."/>
            <person name="Swennen D."/>
            <person name="Tekaia F."/>
            <person name="Wesolowski-Louvel M."/>
            <person name="Westhof E."/>
            <person name="Wirth B."/>
            <person name="Zeniou-Meyer M."/>
            <person name="Zivanovic Y."/>
            <person name="Bolotin-Fukuhara M."/>
            <person name="Thierry A."/>
            <person name="Bouchier C."/>
            <person name="Caudron B."/>
            <person name="Scarpelli C."/>
            <person name="Gaillardin C."/>
            <person name="Weissenbach J."/>
            <person name="Wincker P."/>
            <person name="Souciet J.-L."/>
        </authorList>
    </citation>
    <scope>NUCLEOTIDE SEQUENCE [LARGE SCALE GENOMIC DNA]</scope>
    <source>
        <strain>ATCC 8585 / CBS 2359 / DSM 70799 / NBRC 1267 / NRRL Y-1140 / WM37</strain>
    </source>
</reference>
<sequence>MSVCQTNPLNTLVSKSGYRFGQPNQHQQSIAQQQSRPRNNALDHQFSQFTGASGPSFAHPQHQQLPMAAVVANATTAASTTSNTATASDHHVWIDQFANMQVHDKTEFPTDYKQMYSQYEARGASYSMGAPVMVSHSQMFPRHQQSLMVNQLESQAYASSSAKLDEQFAELERQVQDDEKEQQQDKDDDFHLKETSPLDEDQRQLKEAAQSIYTTLSDKSSTTSSKFSNSKFLGLMRNISDGVITLKKNPDEDKYTELYSPSTGETFGEEYFPVQDSVLGDPLDSIGDLSNMSSSEAAAKVYHNSV</sequence>
<evidence type="ECO:0000250" key="1">
    <source>
        <dbReference type="UniProtKB" id="P35056"/>
    </source>
</evidence>
<evidence type="ECO:0000250" key="2">
    <source>
        <dbReference type="UniProtKB" id="P50091"/>
    </source>
</evidence>
<evidence type="ECO:0000250" key="3">
    <source>
        <dbReference type="UniProtKB" id="P50542"/>
    </source>
</evidence>
<evidence type="ECO:0000256" key="4">
    <source>
        <dbReference type="SAM" id="MobiDB-lite"/>
    </source>
</evidence>
<evidence type="ECO:0000305" key="5"/>
<name>PEX21_KLULA</name>
<gene>
    <name type="primary">PEX21</name>
    <name type="ordered locus">KLLA0E15554g</name>
</gene>
<organism>
    <name type="scientific">Kluyveromyces lactis (strain ATCC 8585 / CBS 2359 / DSM 70799 / NBRC 1267 / NRRL Y-1140 / WM37)</name>
    <name type="common">Yeast</name>
    <name type="synonym">Candida sphaerica</name>
    <dbReference type="NCBI Taxonomy" id="284590"/>
    <lineage>
        <taxon>Eukaryota</taxon>
        <taxon>Fungi</taxon>
        <taxon>Dikarya</taxon>
        <taxon>Ascomycota</taxon>
        <taxon>Saccharomycotina</taxon>
        <taxon>Saccharomycetes</taxon>
        <taxon>Saccharomycetales</taxon>
        <taxon>Saccharomycetaceae</taxon>
        <taxon>Kluyveromyces</taxon>
    </lineage>
</organism>
<keyword id="KW-0963">Cytoplasm</keyword>
<keyword id="KW-0576">Peroxisome</keyword>
<keyword id="KW-0653">Protein transport</keyword>
<keyword id="KW-1185">Reference proteome</keyword>
<keyword id="KW-0882">Thioester bond</keyword>
<keyword id="KW-0813">Transport</keyword>
<keyword id="KW-0832">Ubl conjugation</keyword>
<proteinExistence type="inferred from homology"/>
<feature type="chain" id="PRO_0000301809" description="Peroxisomal protein PEX21">
    <location>
        <begin position="1"/>
        <end position="306"/>
    </location>
</feature>
<feature type="region of interest" description="Disordered" evidence="4">
    <location>
        <begin position="172"/>
        <end position="203"/>
    </location>
</feature>
<feature type="cross-link" description="Glycyl cysteine thioester (Cys-Gly) (interchain with G-Cter in ubiquitin)" evidence="1">
    <location>
        <position position="4"/>
    </location>
</feature>
<accession>Q6CN41</accession>
<protein>
    <recommendedName>
        <fullName>Peroxisomal protein PEX21</fullName>
    </recommendedName>
    <alternativeName>
        <fullName>Peroxin-21</fullName>
    </alternativeName>
</protein>
<dbReference type="EMBL" id="CR382125">
    <property type="protein sequence ID" value="CAG99735.1"/>
    <property type="molecule type" value="Genomic_DNA"/>
</dbReference>
<dbReference type="RefSeq" id="XP_454648.1">
    <property type="nucleotide sequence ID" value="XM_454648.1"/>
</dbReference>
<dbReference type="SMR" id="Q6CN41"/>
<dbReference type="FunCoup" id="Q6CN41">
    <property type="interactions" value="35"/>
</dbReference>
<dbReference type="STRING" id="284590.Q6CN41"/>
<dbReference type="PaxDb" id="284590-Q6CN41"/>
<dbReference type="KEGG" id="kla:KLLA0_E15467g"/>
<dbReference type="eggNOG" id="ENOG502S8JP">
    <property type="taxonomic scope" value="Eukaryota"/>
</dbReference>
<dbReference type="HOGENOM" id="CLU_1054066_0_0_1"/>
<dbReference type="InParanoid" id="Q6CN41"/>
<dbReference type="OMA" id="NENSTIM"/>
<dbReference type="Proteomes" id="UP000000598">
    <property type="component" value="Chromosome E"/>
</dbReference>
<dbReference type="GO" id="GO:0005829">
    <property type="term" value="C:cytosol"/>
    <property type="evidence" value="ECO:0007669"/>
    <property type="project" value="UniProtKB-SubCell"/>
</dbReference>
<dbReference type="GO" id="GO:0005777">
    <property type="term" value="C:peroxisome"/>
    <property type="evidence" value="ECO:0007669"/>
    <property type="project" value="UniProtKB-SubCell"/>
</dbReference>
<dbReference type="GO" id="GO:0015031">
    <property type="term" value="P:protein transport"/>
    <property type="evidence" value="ECO:0007669"/>
    <property type="project" value="UniProtKB-KW"/>
</dbReference>
<dbReference type="Gene3D" id="6.10.280.230">
    <property type="match status" value="1"/>
</dbReference>
<dbReference type="InterPro" id="IPR056940">
    <property type="entry name" value="PEX18_PEX21_C"/>
</dbReference>
<dbReference type="Pfam" id="PF25098">
    <property type="entry name" value="PEX18_PEX21_C"/>
    <property type="match status" value="1"/>
</dbReference>
<comment type="function">
    <text evidence="2 3">Mediates peroxisomal import of proteins containing a C-terminal PTS2-type peroxisomal targeting signal via its interaction with PEX7 (By similarity). Interaction with PEX7 only takes place when PEX7 is associated with cargo proteins containing a PTS2 peroxisomal targeting signal (By similarity). PEX7 along with PTS2-containing cargo proteins are then translocated through the PEX13-PEX14 docking complex together with PEX21 (By similarity).</text>
</comment>
<comment type="subunit">
    <text evidence="2">Interacts with PEX7.</text>
</comment>
<comment type="subcellular location">
    <subcellularLocation>
        <location evidence="2">Cytoplasm</location>
        <location evidence="2">Cytosol</location>
    </subcellularLocation>
    <subcellularLocation>
        <location evidence="2">Peroxisome</location>
    </subcellularLocation>
    <text evidence="2">Cycles between the cytosol and the peroxisome.</text>
</comment>
<comment type="PTM">
    <text evidence="1">Monoubiquitinated at Cys-4; acts as a signal for PEX21 extraction and is required for proper export from peroxisomes and recycling.</text>
</comment>
<comment type="similarity">
    <text evidence="5">Belongs to the peroxin-21 family.</text>
</comment>